<reference key="1">
    <citation type="submission" date="2008-02" db="EMBL/GenBank/DDBJ databases">
        <title>Complete sequence of Haemophilus somnus 2336.</title>
        <authorList>
            <consortium name="US DOE Joint Genome Institute"/>
            <person name="Siddaramappa S."/>
            <person name="Duncan A.J."/>
            <person name="Challacombe J.F."/>
            <person name="Rainey D."/>
            <person name="Gillaspy A.F."/>
            <person name="Carson M."/>
            <person name="Gipson J."/>
            <person name="Gipson M."/>
            <person name="Bruce D."/>
            <person name="Detter J.C."/>
            <person name="Han C.S."/>
            <person name="Land M."/>
            <person name="Tapia R."/>
            <person name="Thompson L.S."/>
            <person name="Orvis J."/>
            <person name="Zaitshik J."/>
            <person name="Barnes G."/>
            <person name="Brettin T.S."/>
            <person name="Dyer D.W."/>
            <person name="Inzana T.J."/>
        </authorList>
    </citation>
    <scope>NUCLEOTIDE SEQUENCE [LARGE SCALE GENOMIC DNA]</scope>
    <source>
        <strain>2336</strain>
    </source>
</reference>
<accession>B0USL2</accession>
<keyword id="KW-1003">Cell membrane</keyword>
<keyword id="KW-0210">Decarboxylase</keyword>
<keyword id="KW-0285">Flavoprotein</keyword>
<keyword id="KW-0288">FMN</keyword>
<keyword id="KW-0456">Lyase</keyword>
<keyword id="KW-0464">Manganese</keyword>
<keyword id="KW-0472">Membrane</keyword>
<keyword id="KW-0479">Metal-binding</keyword>
<keyword id="KW-0831">Ubiquinone biosynthesis</keyword>
<feature type="chain" id="PRO_1000088189" description="3-octaprenyl-4-hydroxybenzoate carboxy-lyase">
    <location>
        <begin position="1"/>
        <end position="491"/>
    </location>
</feature>
<feature type="active site" description="Proton donor" evidence="1">
    <location>
        <position position="287"/>
    </location>
</feature>
<feature type="binding site" evidence="1">
    <location>
        <position position="172"/>
    </location>
    <ligand>
        <name>Mn(2+)</name>
        <dbReference type="ChEBI" id="CHEBI:29035"/>
    </ligand>
</feature>
<feature type="binding site" evidence="1">
    <location>
        <begin position="175"/>
        <end position="177"/>
    </location>
    <ligand>
        <name>prenylated FMN</name>
        <dbReference type="ChEBI" id="CHEBI:87746"/>
    </ligand>
</feature>
<feature type="binding site" evidence="1">
    <location>
        <begin position="189"/>
        <end position="191"/>
    </location>
    <ligand>
        <name>prenylated FMN</name>
        <dbReference type="ChEBI" id="CHEBI:87746"/>
    </ligand>
</feature>
<feature type="binding site" evidence="1">
    <location>
        <begin position="194"/>
        <end position="195"/>
    </location>
    <ligand>
        <name>prenylated FMN</name>
        <dbReference type="ChEBI" id="CHEBI:87746"/>
    </ligand>
</feature>
<feature type="binding site" evidence="1">
    <location>
        <position position="238"/>
    </location>
    <ligand>
        <name>Mn(2+)</name>
        <dbReference type="ChEBI" id="CHEBI:29035"/>
    </ligand>
</feature>
<evidence type="ECO:0000255" key="1">
    <source>
        <dbReference type="HAMAP-Rule" id="MF_01636"/>
    </source>
</evidence>
<name>UBID_HISS2</name>
<organism>
    <name type="scientific">Histophilus somni (strain 2336)</name>
    <name type="common">Haemophilus somnus</name>
    <dbReference type="NCBI Taxonomy" id="228400"/>
    <lineage>
        <taxon>Bacteria</taxon>
        <taxon>Pseudomonadati</taxon>
        <taxon>Pseudomonadota</taxon>
        <taxon>Gammaproteobacteria</taxon>
        <taxon>Pasteurellales</taxon>
        <taxon>Pasteurellaceae</taxon>
        <taxon>Histophilus</taxon>
    </lineage>
</organism>
<protein>
    <recommendedName>
        <fullName evidence="1">3-octaprenyl-4-hydroxybenzoate carboxy-lyase</fullName>
        <ecNumber evidence="1">4.1.1.98</ecNumber>
    </recommendedName>
    <alternativeName>
        <fullName evidence="1">Polyprenyl p-hydroxybenzoate decarboxylase</fullName>
    </alternativeName>
</protein>
<dbReference type="EC" id="4.1.1.98" evidence="1"/>
<dbReference type="EMBL" id="CP000947">
    <property type="protein sequence ID" value="ACA32444.1"/>
    <property type="molecule type" value="Genomic_DNA"/>
</dbReference>
<dbReference type="RefSeq" id="WP_012341593.1">
    <property type="nucleotide sequence ID" value="NC_010519.1"/>
</dbReference>
<dbReference type="SMR" id="B0USL2"/>
<dbReference type="STRING" id="228400.HSM_0773"/>
<dbReference type="GeneID" id="31487062"/>
<dbReference type="KEGG" id="hsm:HSM_0773"/>
<dbReference type="HOGENOM" id="CLU_023348_4_1_6"/>
<dbReference type="UniPathway" id="UPA00232"/>
<dbReference type="GO" id="GO:0005829">
    <property type="term" value="C:cytosol"/>
    <property type="evidence" value="ECO:0007669"/>
    <property type="project" value="TreeGrafter"/>
</dbReference>
<dbReference type="GO" id="GO:0005886">
    <property type="term" value="C:plasma membrane"/>
    <property type="evidence" value="ECO:0007669"/>
    <property type="project" value="UniProtKB-SubCell"/>
</dbReference>
<dbReference type="GO" id="GO:0008694">
    <property type="term" value="F:3-octaprenyl-4-hydroxybenzoate carboxy-lyase activity"/>
    <property type="evidence" value="ECO:0007669"/>
    <property type="project" value="UniProtKB-UniRule"/>
</dbReference>
<dbReference type="GO" id="GO:0046872">
    <property type="term" value="F:metal ion binding"/>
    <property type="evidence" value="ECO:0007669"/>
    <property type="project" value="UniProtKB-KW"/>
</dbReference>
<dbReference type="GO" id="GO:0006744">
    <property type="term" value="P:ubiquinone biosynthetic process"/>
    <property type="evidence" value="ECO:0007669"/>
    <property type="project" value="UniProtKB-UniRule"/>
</dbReference>
<dbReference type="FunFam" id="3.40.1670.10:FF:000001">
    <property type="entry name" value="3-octaprenyl-4-hydroxybenzoate carboxy-lyase"/>
    <property type="match status" value="1"/>
</dbReference>
<dbReference type="Gene3D" id="1.20.5.570">
    <property type="entry name" value="Single helix bin"/>
    <property type="match status" value="1"/>
</dbReference>
<dbReference type="Gene3D" id="3.40.1670.10">
    <property type="entry name" value="UbiD C-terminal domain-like"/>
    <property type="match status" value="1"/>
</dbReference>
<dbReference type="HAMAP" id="MF_01636">
    <property type="entry name" value="UbiD"/>
    <property type="match status" value="1"/>
</dbReference>
<dbReference type="InterPro" id="IPR002830">
    <property type="entry name" value="UbiD"/>
</dbReference>
<dbReference type="InterPro" id="IPR049381">
    <property type="entry name" value="UbiD-like_C"/>
</dbReference>
<dbReference type="InterPro" id="IPR049383">
    <property type="entry name" value="UbiD-like_N"/>
</dbReference>
<dbReference type="InterPro" id="IPR023677">
    <property type="entry name" value="UbiD_bacteria"/>
</dbReference>
<dbReference type="InterPro" id="IPR048304">
    <property type="entry name" value="UbiD_Rift_dom"/>
</dbReference>
<dbReference type="NCBIfam" id="NF008175">
    <property type="entry name" value="PRK10922.1"/>
    <property type="match status" value="1"/>
</dbReference>
<dbReference type="NCBIfam" id="TIGR00148">
    <property type="entry name" value="UbiD family decarboxylase"/>
    <property type="match status" value="1"/>
</dbReference>
<dbReference type="PANTHER" id="PTHR30108">
    <property type="entry name" value="3-OCTAPRENYL-4-HYDROXYBENZOATE CARBOXY-LYASE-RELATED"/>
    <property type="match status" value="1"/>
</dbReference>
<dbReference type="PANTHER" id="PTHR30108:SF17">
    <property type="entry name" value="FERULIC ACID DECARBOXYLASE 1"/>
    <property type="match status" value="1"/>
</dbReference>
<dbReference type="Pfam" id="PF01977">
    <property type="entry name" value="UbiD"/>
    <property type="match status" value="1"/>
</dbReference>
<dbReference type="Pfam" id="PF20696">
    <property type="entry name" value="UbiD_C"/>
    <property type="match status" value="1"/>
</dbReference>
<dbReference type="Pfam" id="PF20695">
    <property type="entry name" value="UbiD_N"/>
    <property type="match status" value="1"/>
</dbReference>
<dbReference type="SUPFAM" id="SSF50475">
    <property type="entry name" value="FMN-binding split barrel"/>
    <property type="match status" value="1"/>
</dbReference>
<dbReference type="SUPFAM" id="SSF143968">
    <property type="entry name" value="UbiD C-terminal domain-like"/>
    <property type="match status" value="1"/>
</dbReference>
<proteinExistence type="inferred from homology"/>
<gene>
    <name evidence="1" type="primary">ubiD</name>
    <name type="ordered locus">HSM_0773</name>
</gene>
<sequence length="491" mass="55621">MKYKNLRDFLELLEKQGELKRITQEIDPYLEMTEIADRTLRAGGPALLFENPKGYEIPVLCNLFGTPKRVALGMGQEDVTALRDVGRLLAFLKEPEQPKSFKDLWSSLPQFKQVLNMPTKVLSKAECQQIVFSDAEVDLYKLPIMHCWKDDVAPLVTWGLTITKGPSKKRQNLGIYRQQLIGKNKLIMRWLSHRGGALDFQEWKEARPNQPFPISVALGADPATILGAVTPVPDTLSEYAFAGLLRGNKTEVVKSISNDLEIPASAEIILEGYIDPTETALEGPYGDHTGYYNEQEYFPVFTVTHLTMRKDPIYHSTYTGRPPDEPAVLGEALNEVFIPILQKQFPEIVDFYLPPEGCSYRLAVVTIKKQYAGHAKRVMMGVWSFLRQFMYTKFVIVCDDDINARDWKDVIWAITTRSDPARDCTIIENTPIDYLDFASPIAGLGSKMGIDATNKWIGETQREWGTPIKKAPNVVKRIDDIWESLNIFAPK</sequence>
<comment type="function">
    <text evidence="1">Catalyzes the decarboxylation of 3-octaprenyl-4-hydroxy benzoate to 2-octaprenylphenol, an intermediate step in ubiquinone biosynthesis.</text>
</comment>
<comment type="catalytic activity">
    <reaction evidence="1">
        <text>a 4-hydroxy-3-(all-trans-polyprenyl)benzoate + H(+) = a 2-(all-trans-polyprenyl)phenol + CO2</text>
        <dbReference type="Rhea" id="RHEA:41680"/>
        <dbReference type="Rhea" id="RHEA-COMP:9514"/>
        <dbReference type="Rhea" id="RHEA-COMP:9516"/>
        <dbReference type="ChEBI" id="CHEBI:1269"/>
        <dbReference type="ChEBI" id="CHEBI:15378"/>
        <dbReference type="ChEBI" id="CHEBI:16526"/>
        <dbReference type="ChEBI" id="CHEBI:78396"/>
        <dbReference type="EC" id="4.1.1.98"/>
    </reaction>
</comment>
<comment type="cofactor">
    <cofactor evidence="1">
        <name>prenylated FMN</name>
        <dbReference type="ChEBI" id="CHEBI:87746"/>
    </cofactor>
    <text evidence="1">Binds 1 prenylated FMN per subunit.</text>
</comment>
<comment type="cofactor">
    <cofactor evidence="1">
        <name>Mn(2+)</name>
        <dbReference type="ChEBI" id="CHEBI:29035"/>
    </cofactor>
</comment>
<comment type="pathway">
    <text evidence="1">Cofactor biosynthesis; ubiquinone biosynthesis.</text>
</comment>
<comment type="subunit">
    <text evidence="1">Homohexamer.</text>
</comment>
<comment type="subcellular location">
    <subcellularLocation>
        <location evidence="1">Cell membrane</location>
        <topology evidence="1">Peripheral membrane protein</topology>
    </subcellularLocation>
</comment>
<comment type="similarity">
    <text evidence="1">Belongs to the UbiD family.</text>
</comment>